<sequence length="48" mass="5382">MTNKNDGKDMRKNAPKGAQPGQPEPLSGSKKVKNRNHTRQKHNSSHDM</sequence>
<reference key="1">
    <citation type="journal article" date="2004" name="J. Mol. Microbiol. Biotechnol.">
        <title>The complete genome sequence of Bacillus licheniformis DSM13, an organism with great industrial potential.</title>
        <authorList>
            <person name="Veith B."/>
            <person name="Herzberg C."/>
            <person name="Steckel S."/>
            <person name="Feesche J."/>
            <person name="Maurer K.H."/>
            <person name="Ehrenreich P."/>
            <person name="Baeumer S."/>
            <person name="Henne A."/>
            <person name="Liesegang H."/>
            <person name="Merkl R."/>
            <person name="Ehrenreich A."/>
            <person name="Gottschalk G."/>
        </authorList>
    </citation>
    <scope>NUCLEOTIDE SEQUENCE [LARGE SCALE GENOMIC DNA]</scope>
    <source>
        <strain>ATCC 14580 / DSM 13 / JCM 2505 / CCUG 7422 / NBRC 12200 / NCIMB 9375 / NCTC 10341 / NRRL NRS-1264 / Gibson 46</strain>
    </source>
</reference>
<reference key="2">
    <citation type="journal article" date="2004" name="Genome Biol.">
        <title>Complete genome sequence of the industrial bacterium Bacillus licheniformis and comparisons with closely related Bacillus species.</title>
        <authorList>
            <person name="Rey M.W."/>
            <person name="Ramaiya P."/>
            <person name="Nelson B.A."/>
            <person name="Brody-Karpin S.D."/>
            <person name="Zaretsky E.J."/>
            <person name="Tang M."/>
            <person name="Lopez de Leon A."/>
            <person name="Xiang H."/>
            <person name="Gusti V."/>
            <person name="Clausen I.G."/>
            <person name="Olsen P.B."/>
            <person name="Rasmussen M.D."/>
            <person name="Andersen J.T."/>
            <person name="Joergensen P.L."/>
            <person name="Larsen T.S."/>
            <person name="Sorokin A."/>
            <person name="Bolotin A."/>
            <person name="Lapidus A."/>
            <person name="Galleron N."/>
            <person name="Ehrlich S.D."/>
            <person name="Berka R.M."/>
        </authorList>
    </citation>
    <scope>NUCLEOTIDE SEQUENCE [LARGE SCALE GENOMIC DNA]</scope>
    <source>
        <strain>ATCC 14580 / DSM 13 / JCM 2505 / CCUG 7422 / NBRC 12200 / NCIMB 9375 / NCTC 10341 / NRRL NRS-1264 / Gibson 46</strain>
    </source>
</reference>
<feature type="chain" id="PRO_0000217213" description="Small, acid-soluble spore protein P">
    <location>
        <begin position="1"/>
        <end position="48"/>
    </location>
</feature>
<feature type="region of interest" description="Disordered" evidence="2">
    <location>
        <begin position="1"/>
        <end position="48"/>
    </location>
</feature>
<feature type="compositionally biased region" description="Basic and acidic residues" evidence="2">
    <location>
        <begin position="1"/>
        <end position="12"/>
    </location>
</feature>
<feature type="compositionally biased region" description="Basic residues" evidence="2">
    <location>
        <begin position="30"/>
        <end position="48"/>
    </location>
</feature>
<keyword id="KW-1185">Reference proteome</keyword>
<keyword id="KW-0749">Sporulation</keyword>
<proteinExistence type="inferred from homology"/>
<organism>
    <name type="scientific">Bacillus licheniformis (strain ATCC 14580 / DSM 13 / JCM 2505 / CCUG 7422 / NBRC 12200 / NCIMB 9375 / NCTC 10341 / NRRL NRS-1264 / Gibson 46)</name>
    <dbReference type="NCBI Taxonomy" id="279010"/>
    <lineage>
        <taxon>Bacteria</taxon>
        <taxon>Bacillati</taxon>
        <taxon>Bacillota</taxon>
        <taxon>Bacilli</taxon>
        <taxon>Bacillales</taxon>
        <taxon>Bacillaceae</taxon>
        <taxon>Bacillus</taxon>
    </lineage>
</organism>
<name>SSPP_BACLD</name>
<protein>
    <recommendedName>
        <fullName evidence="1">Small, acid-soluble spore protein P</fullName>
        <shortName evidence="1">SASP P</shortName>
    </recommendedName>
</protein>
<gene>
    <name evidence="1" type="primary">sspP</name>
    <name type="ordered locus">BLi02045</name>
    <name type="ordered locus">BL05190</name>
</gene>
<dbReference type="EMBL" id="AE017333">
    <property type="protein sequence ID" value="AAU40935.1"/>
    <property type="molecule type" value="Genomic_DNA"/>
</dbReference>
<dbReference type="EMBL" id="CP000002">
    <property type="protein sequence ID" value="AAU23573.1"/>
    <property type="molecule type" value="Genomic_DNA"/>
</dbReference>
<dbReference type="RefSeq" id="WP_003182250.1">
    <property type="nucleotide sequence ID" value="NC_006322.1"/>
</dbReference>
<dbReference type="STRING" id="279010.BL05190"/>
<dbReference type="KEGG" id="bld:BLi02045"/>
<dbReference type="KEGG" id="bli:BL05190"/>
<dbReference type="eggNOG" id="ENOG5032ZXB">
    <property type="taxonomic scope" value="Bacteria"/>
</dbReference>
<dbReference type="HOGENOM" id="CLU_210130_1_0_9"/>
<dbReference type="Proteomes" id="UP000000606">
    <property type="component" value="Chromosome"/>
</dbReference>
<dbReference type="GO" id="GO:0030436">
    <property type="term" value="P:asexual sporulation"/>
    <property type="evidence" value="ECO:0007669"/>
    <property type="project" value="UniProtKB-UniRule"/>
</dbReference>
<dbReference type="GO" id="GO:0030435">
    <property type="term" value="P:sporulation resulting in formation of a cellular spore"/>
    <property type="evidence" value="ECO:0007669"/>
    <property type="project" value="UniProtKB-KW"/>
</dbReference>
<dbReference type="HAMAP" id="MF_00666">
    <property type="entry name" value="SspP"/>
    <property type="match status" value="1"/>
</dbReference>
<dbReference type="InterPro" id="IPR012614">
    <property type="entry name" value="SASP_SspP"/>
</dbReference>
<dbReference type="NCBIfam" id="NF006905">
    <property type="entry name" value="PRK09399.1"/>
    <property type="match status" value="1"/>
</dbReference>
<dbReference type="Pfam" id="PF08179">
    <property type="entry name" value="SspP"/>
    <property type="match status" value="1"/>
</dbReference>
<accession>Q65J29</accession>
<accession>Q62UI6</accession>
<evidence type="ECO:0000255" key="1">
    <source>
        <dbReference type="HAMAP-Rule" id="MF_00666"/>
    </source>
</evidence>
<evidence type="ECO:0000256" key="2">
    <source>
        <dbReference type="SAM" id="MobiDB-lite"/>
    </source>
</evidence>
<comment type="subcellular location">
    <subcellularLocation>
        <location evidence="1">Spore core</location>
    </subcellularLocation>
</comment>
<comment type="induction">
    <text evidence="1">Expressed only in the forespore compartment of sporulating cells.</text>
</comment>
<comment type="similarity">
    <text evidence="1">Belongs to the SspP family.</text>
</comment>